<gene>
    <name evidence="1" type="primary">pepQ</name>
    <name type="ordered locus">SSPA3561</name>
</gene>
<feature type="chain" id="PRO_1000140329" description="Xaa-Pro dipeptidase">
    <location>
        <begin position="1"/>
        <end position="443"/>
    </location>
</feature>
<feature type="binding site" evidence="1">
    <location>
        <position position="246"/>
    </location>
    <ligand>
        <name>Mn(2+)</name>
        <dbReference type="ChEBI" id="CHEBI:29035"/>
        <label>2</label>
    </ligand>
</feature>
<feature type="binding site" evidence="1">
    <location>
        <position position="257"/>
    </location>
    <ligand>
        <name>Mn(2+)</name>
        <dbReference type="ChEBI" id="CHEBI:29035"/>
        <label>1</label>
    </ligand>
</feature>
<feature type="binding site" evidence="1">
    <location>
        <position position="257"/>
    </location>
    <ligand>
        <name>Mn(2+)</name>
        <dbReference type="ChEBI" id="CHEBI:29035"/>
        <label>2</label>
    </ligand>
</feature>
<feature type="binding site" evidence="1">
    <location>
        <position position="339"/>
    </location>
    <ligand>
        <name>Mn(2+)</name>
        <dbReference type="ChEBI" id="CHEBI:29035"/>
        <label>1</label>
    </ligand>
</feature>
<feature type="binding site" evidence="1">
    <location>
        <position position="384"/>
    </location>
    <ligand>
        <name>Mn(2+)</name>
        <dbReference type="ChEBI" id="CHEBI:29035"/>
        <label>1</label>
    </ligand>
</feature>
<feature type="binding site" evidence="1">
    <location>
        <position position="423"/>
    </location>
    <ligand>
        <name>Mn(2+)</name>
        <dbReference type="ChEBI" id="CHEBI:29035"/>
        <label>1</label>
    </ligand>
</feature>
<feature type="binding site" evidence="1">
    <location>
        <position position="423"/>
    </location>
    <ligand>
        <name>Mn(2+)</name>
        <dbReference type="ChEBI" id="CHEBI:29035"/>
        <label>2</label>
    </ligand>
</feature>
<name>PEPQ_SALPK</name>
<evidence type="ECO:0000255" key="1">
    <source>
        <dbReference type="HAMAP-Rule" id="MF_01279"/>
    </source>
</evidence>
<keyword id="KW-0224">Dipeptidase</keyword>
<keyword id="KW-0378">Hydrolase</keyword>
<keyword id="KW-0464">Manganese</keyword>
<keyword id="KW-0479">Metal-binding</keyword>
<keyword id="KW-0482">Metalloprotease</keyword>
<keyword id="KW-0645">Protease</keyword>
<protein>
    <recommendedName>
        <fullName evidence="1">Xaa-Pro dipeptidase</fullName>
        <shortName evidence="1">X-Pro dipeptidase</shortName>
        <ecNumber evidence="1">3.4.13.9</ecNumber>
    </recommendedName>
    <alternativeName>
        <fullName evidence="1">Imidodipeptidase</fullName>
    </alternativeName>
    <alternativeName>
        <fullName evidence="1">Proline dipeptidase</fullName>
        <shortName evidence="1">Prolidase</shortName>
    </alternativeName>
</protein>
<proteinExistence type="inferred from homology"/>
<reference key="1">
    <citation type="journal article" date="2009" name="BMC Genomics">
        <title>Pseudogene accumulation in the evolutionary histories of Salmonella enterica serovars Paratyphi A and Typhi.</title>
        <authorList>
            <person name="Holt K.E."/>
            <person name="Thomson N.R."/>
            <person name="Wain J."/>
            <person name="Langridge G.C."/>
            <person name="Hasan R."/>
            <person name="Bhutta Z.A."/>
            <person name="Quail M.A."/>
            <person name="Norbertczak H."/>
            <person name="Walker D."/>
            <person name="Simmonds M."/>
            <person name="White B."/>
            <person name="Bason N."/>
            <person name="Mungall K."/>
            <person name="Dougan G."/>
            <person name="Parkhill J."/>
        </authorList>
    </citation>
    <scope>NUCLEOTIDE SEQUENCE [LARGE SCALE GENOMIC DNA]</scope>
    <source>
        <strain>AKU_12601</strain>
    </source>
</reference>
<accession>B5BIZ1</accession>
<organism>
    <name type="scientific">Salmonella paratyphi A (strain AKU_12601)</name>
    <dbReference type="NCBI Taxonomy" id="554290"/>
    <lineage>
        <taxon>Bacteria</taxon>
        <taxon>Pseudomonadati</taxon>
        <taxon>Pseudomonadota</taxon>
        <taxon>Gammaproteobacteria</taxon>
        <taxon>Enterobacterales</taxon>
        <taxon>Enterobacteriaceae</taxon>
        <taxon>Salmonella</taxon>
    </lineage>
</organism>
<comment type="function">
    <text evidence="1">Splits dipeptides with a prolyl residue in the C-terminal position.</text>
</comment>
<comment type="catalytic activity">
    <reaction evidence="1">
        <text>Xaa-L-Pro dipeptide + H2O = an L-alpha-amino acid + L-proline</text>
        <dbReference type="Rhea" id="RHEA:76407"/>
        <dbReference type="ChEBI" id="CHEBI:15377"/>
        <dbReference type="ChEBI" id="CHEBI:59869"/>
        <dbReference type="ChEBI" id="CHEBI:60039"/>
        <dbReference type="ChEBI" id="CHEBI:195196"/>
        <dbReference type="EC" id="3.4.13.9"/>
    </reaction>
</comment>
<comment type="cofactor">
    <cofactor evidence="1">
        <name>Mn(2+)</name>
        <dbReference type="ChEBI" id="CHEBI:29035"/>
    </cofactor>
    <text evidence="1">Binds 2 manganese ions per subunit.</text>
</comment>
<comment type="similarity">
    <text evidence="1">Belongs to the peptidase M24B family. Bacterial-type prolidase subfamily.</text>
</comment>
<sequence length="443" mass="50170">MESLAALYKNHIVTLQERTRDVLARFKLDALLIHSGELFNVFLDDHPYPFKVNPQFKAWVPVTQVPNCWLLVDGVNKPKLWFYLPVDYWHNVEPLPTSFWTEEVEVVALPKADGIGSQLPAARGNIGYIGPVPERALQLDIAASNINPKGVIDYLHYYRAYKTDYELACMREAQKMAVSGHRAAEEAFRSGMSEFDINLAYLTATGHRDTDVPYSNIVALNEHAAVLHYTKLDHQAPSEMRSFLLDAGAEYNGYAADLTRTWSAKSDNDYAHLVKDVNDEQLALIATMKAGVSYVDYHIQFHQRIAKLLRKHQIITDMSEEAMVENDLTGPFMPHGIGHPLGLQVHDVAGFMQDDSGTHLAAPSKYPYLRCTRVLQPRMVLTIEPGIYFIESLLAPWREGPFSKHFNWQKIEALKPFGGIRIEDNVVIHENGVENMTRDLKLA</sequence>
<dbReference type="EC" id="3.4.13.9" evidence="1"/>
<dbReference type="EMBL" id="FM200053">
    <property type="protein sequence ID" value="CAR61841.1"/>
    <property type="molecule type" value="Genomic_DNA"/>
</dbReference>
<dbReference type="RefSeq" id="WP_000444529.1">
    <property type="nucleotide sequence ID" value="NC_011147.1"/>
</dbReference>
<dbReference type="SMR" id="B5BIZ1"/>
<dbReference type="MEROPS" id="M24.003"/>
<dbReference type="KEGG" id="sek:SSPA3561"/>
<dbReference type="HOGENOM" id="CLU_050675_0_0_6"/>
<dbReference type="Proteomes" id="UP000001869">
    <property type="component" value="Chromosome"/>
</dbReference>
<dbReference type="GO" id="GO:0005829">
    <property type="term" value="C:cytosol"/>
    <property type="evidence" value="ECO:0007669"/>
    <property type="project" value="TreeGrafter"/>
</dbReference>
<dbReference type="GO" id="GO:0004177">
    <property type="term" value="F:aminopeptidase activity"/>
    <property type="evidence" value="ECO:0007669"/>
    <property type="project" value="TreeGrafter"/>
</dbReference>
<dbReference type="GO" id="GO:0046872">
    <property type="term" value="F:metal ion binding"/>
    <property type="evidence" value="ECO:0007669"/>
    <property type="project" value="UniProtKB-KW"/>
</dbReference>
<dbReference type="GO" id="GO:0008235">
    <property type="term" value="F:metalloexopeptidase activity"/>
    <property type="evidence" value="ECO:0007669"/>
    <property type="project" value="UniProtKB-UniRule"/>
</dbReference>
<dbReference type="GO" id="GO:0016795">
    <property type="term" value="F:phosphoric triester hydrolase activity"/>
    <property type="evidence" value="ECO:0007669"/>
    <property type="project" value="InterPro"/>
</dbReference>
<dbReference type="GO" id="GO:0102009">
    <property type="term" value="F:proline dipeptidase activity"/>
    <property type="evidence" value="ECO:0007669"/>
    <property type="project" value="UniProtKB-EC"/>
</dbReference>
<dbReference type="GO" id="GO:0006508">
    <property type="term" value="P:proteolysis"/>
    <property type="evidence" value="ECO:0007669"/>
    <property type="project" value="UniProtKB-KW"/>
</dbReference>
<dbReference type="CDD" id="cd01087">
    <property type="entry name" value="Prolidase"/>
    <property type="match status" value="1"/>
</dbReference>
<dbReference type="FunFam" id="3.40.350.10:FF:000002">
    <property type="entry name" value="Xaa-Pro dipeptidase"/>
    <property type="match status" value="1"/>
</dbReference>
<dbReference type="FunFam" id="3.90.230.10:FF:000006">
    <property type="entry name" value="Xaa-Pro dipeptidase"/>
    <property type="match status" value="1"/>
</dbReference>
<dbReference type="Gene3D" id="3.90.230.10">
    <property type="entry name" value="Creatinase/methionine aminopeptidase superfamily"/>
    <property type="match status" value="1"/>
</dbReference>
<dbReference type="Gene3D" id="3.40.350.10">
    <property type="entry name" value="Creatinase/prolidase N-terminal domain"/>
    <property type="match status" value="1"/>
</dbReference>
<dbReference type="HAMAP" id="MF_01279">
    <property type="entry name" value="X_Pro_dipeptid"/>
    <property type="match status" value="1"/>
</dbReference>
<dbReference type="InterPro" id="IPR029149">
    <property type="entry name" value="Creatin/AminoP/Spt16_N"/>
</dbReference>
<dbReference type="InterPro" id="IPR036005">
    <property type="entry name" value="Creatinase/aminopeptidase-like"/>
</dbReference>
<dbReference type="InterPro" id="IPR048819">
    <property type="entry name" value="PepQ_N"/>
</dbReference>
<dbReference type="InterPro" id="IPR000994">
    <property type="entry name" value="Pept_M24"/>
</dbReference>
<dbReference type="InterPro" id="IPR001131">
    <property type="entry name" value="Peptidase_M24B_aminopep-P_CS"/>
</dbReference>
<dbReference type="InterPro" id="IPR052433">
    <property type="entry name" value="X-Pro_dipept-like"/>
</dbReference>
<dbReference type="InterPro" id="IPR022846">
    <property type="entry name" value="X_Pro_dipept"/>
</dbReference>
<dbReference type="NCBIfam" id="NF010133">
    <property type="entry name" value="PRK13607.1"/>
    <property type="match status" value="1"/>
</dbReference>
<dbReference type="PANTHER" id="PTHR43226">
    <property type="entry name" value="XAA-PRO AMINOPEPTIDASE 3"/>
    <property type="match status" value="1"/>
</dbReference>
<dbReference type="PANTHER" id="PTHR43226:SF8">
    <property type="entry name" value="XAA-PRO DIPEPTIDASE"/>
    <property type="match status" value="1"/>
</dbReference>
<dbReference type="Pfam" id="PF21216">
    <property type="entry name" value="PepQ_N"/>
    <property type="match status" value="1"/>
</dbReference>
<dbReference type="Pfam" id="PF00557">
    <property type="entry name" value="Peptidase_M24"/>
    <property type="match status" value="1"/>
</dbReference>
<dbReference type="SUPFAM" id="SSF55920">
    <property type="entry name" value="Creatinase/aminopeptidase"/>
    <property type="match status" value="1"/>
</dbReference>
<dbReference type="PROSITE" id="PS00491">
    <property type="entry name" value="PROLINE_PEPTIDASE"/>
    <property type="match status" value="1"/>
</dbReference>